<protein>
    <recommendedName>
        <fullName evidence="1">Small ribosomal subunit protein uS19</fullName>
    </recommendedName>
    <alternativeName>
        <fullName evidence="2">30S ribosomal protein S19</fullName>
    </alternativeName>
</protein>
<feature type="chain" id="PRO_0000265440" description="Small ribosomal subunit protein uS19">
    <location>
        <begin position="1"/>
        <end position="92"/>
    </location>
</feature>
<gene>
    <name evidence="1" type="primary">rpsS</name>
    <name type="ordered locus">SAUSA300_2200</name>
</gene>
<proteinExistence type="inferred from homology"/>
<accession>Q2FEP3</accession>
<comment type="function">
    <text evidence="1">Protein S19 forms a complex with S13 that binds strongly to the 16S ribosomal RNA.</text>
</comment>
<comment type="similarity">
    <text evidence="1">Belongs to the universal ribosomal protein uS19 family.</text>
</comment>
<sequence length="92" mass="10615">MARSIKKGPFVDEHLMKKVEAQEGSEKKQVIKTWSRRSTIFPNFIGHTFAVYDGRKHVPVYVTEDMVGHKLGEFAPTRTFKGHVADDKKTRR</sequence>
<keyword id="KW-0687">Ribonucleoprotein</keyword>
<keyword id="KW-0689">Ribosomal protein</keyword>
<keyword id="KW-0694">RNA-binding</keyword>
<keyword id="KW-0699">rRNA-binding</keyword>
<dbReference type="EMBL" id="CP000255">
    <property type="protein sequence ID" value="ABD22786.1"/>
    <property type="molecule type" value="Genomic_DNA"/>
</dbReference>
<dbReference type="RefSeq" id="WP_000124353.1">
    <property type="nucleotide sequence ID" value="NZ_CP027476.1"/>
</dbReference>
<dbReference type="SMR" id="Q2FEP3"/>
<dbReference type="GeneID" id="98346558"/>
<dbReference type="KEGG" id="saa:SAUSA300_2200"/>
<dbReference type="HOGENOM" id="CLU_144911_0_1_9"/>
<dbReference type="Proteomes" id="UP000001939">
    <property type="component" value="Chromosome"/>
</dbReference>
<dbReference type="GO" id="GO:0005737">
    <property type="term" value="C:cytoplasm"/>
    <property type="evidence" value="ECO:0007669"/>
    <property type="project" value="UniProtKB-ARBA"/>
</dbReference>
<dbReference type="GO" id="GO:0015935">
    <property type="term" value="C:small ribosomal subunit"/>
    <property type="evidence" value="ECO:0007669"/>
    <property type="project" value="InterPro"/>
</dbReference>
<dbReference type="GO" id="GO:0019843">
    <property type="term" value="F:rRNA binding"/>
    <property type="evidence" value="ECO:0007669"/>
    <property type="project" value="UniProtKB-UniRule"/>
</dbReference>
<dbReference type="GO" id="GO:0003735">
    <property type="term" value="F:structural constituent of ribosome"/>
    <property type="evidence" value="ECO:0007669"/>
    <property type="project" value="InterPro"/>
</dbReference>
<dbReference type="GO" id="GO:0000028">
    <property type="term" value="P:ribosomal small subunit assembly"/>
    <property type="evidence" value="ECO:0007669"/>
    <property type="project" value="TreeGrafter"/>
</dbReference>
<dbReference type="GO" id="GO:0006412">
    <property type="term" value="P:translation"/>
    <property type="evidence" value="ECO:0007669"/>
    <property type="project" value="UniProtKB-UniRule"/>
</dbReference>
<dbReference type="FunFam" id="3.30.860.10:FF:000001">
    <property type="entry name" value="30S ribosomal protein S19"/>
    <property type="match status" value="1"/>
</dbReference>
<dbReference type="Gene3D" id="3.30.860.10">
    <property type="entry name" value="30s Ribosomal Protein S19, Chain A"/>
    <property type="match status" value="1"/>
</dbReference>
<dbReference type="HAMAP" id="MF_00531">
    <property type="entry name" value="Ribosomal_uS19"/>
    <property type="match status" value="1"/>
</dbReference>
<dbReference type="InterPro" id="IPR002222">
    <property type="entry name" value="Ribosomal_uS19"/>
</dbReference>
<dbReference type="InterPro" id="IPR005732">
    <property type="entry name" value="Ribosomal_uS19_bac-type"/>
</dbReference>
<dbReference type="InterPro" id="IPR020934">
    <property type="entry name" value="Ribosomal_uS19_CS"/>
</dbReference>
<dbReference type="InterPro" id="IPR023575">
    <property type="entry name" value="Ribosomal_uS19_SF"/>
</dbReference>
<dbReference type="NCBIfam" id="TIGR01050">
    <property type="entry name" value="rpsS_bact"/>
    <property type="match status" value="1"/>
</dbReference>
<dbReference type="PANTHER" id="PTHR11880">
    <property type="entry name" value="RIBOSOMAL PROTEIN S19P FAMILY MEMBER"/>
    <property type="match status" value="1"/>
</dbReference>
<dbReference type="PANTHER" id="PTHR11880:SF8">
    <property type="entry name" value="SMALL RIBOSOMAL SUBUNIT PROTEIN US19M"/>
    <property type="match status" value="1"/>
</dbReference>
<dbReference type="Pfam" id="PF00203">
    <property type="entry name" value="Ribosomal_S19"/>
    <property type="match status" value="1"/>
</dbReference>
<dbReference type="PIRSF" id="PIRSF002144">
    <property type="entry name" value="Ribosomal_S19"/>
    <property type="match status" value="1"/>
</dbReference>
<dbReference type="PRINTS" id="PR00975">
    <property type="entry name" value="RIBOSOMALS19"/>
</dbReference>
<dbReference type="SUPFAM" id="SSF54570">
    <property type="entry name" value="Ribosomal protein S19"/>
    <property type="match status" value="1"/>
</dbReference>
<dbReference type="PROSITE" id="PS00323">
    <property type="entry name" value="RIBOSOMAL_S19"/>
    <property type="match status" value="1"/>
</dbReference>
<evidence type="ECO:0000255" key="1">
    <source>
        <dbReference type="HAMAP-Rule" id="MF_00531"/>
    </source>
</evidence>
<evidence type="ECO:0000305" key="2"/>
<organism>
    <name type="scientific">Staphylococcus aureus (strain USA300)</name>
    <dbReference type="NCBI Taxonomy" id="367830"/>
    <lineage>
        <taxon>Bacteria</taxon>
        <taxon>Bacillati</taxon>
        <taxon>Bacillota</taxon>
        <taxon>Bacilli</taxon>
        <taxon>Bacillales</taxon>
        <taxon>Staphylococcaceae</taxon>
        <taxon>Staphylococcus</taxon>
    </lineage>
</organism>
<reference key="1">
    <citation type="journal article" date="2006" name="Lancet">
        <title>Complete genome sequence of USA300, an epidemic clone of community-acquired meticillin-resistant Staphylococcus aureus.</title>
        <authorList>
            <person name="Diep B.A."/>
            <person name="Gill S.R."/>
            <person name="Chang R.F."/>
            <person name="Phan T.H."/>
            <person name="Chen J.H."/>
            <person name="Davidson M.G."/>
            <person name="Lin F."/>
            <person name="Lin J."/>
            <person name="Carleton H.A."/>
            <person name="Mongodin E.F."/>
            <person name="Sensabaugh G.F."/>
            <person name="Perdreau-Remington F."/>
        </authorList>
    </citation>
    <scope>NUCLEOTIDE SEQUENCE [LARGE SCALE GENOMIC DNA]</scope>
    <source>
        <strain>USA300</strain>
    </source>
</reference>
<name>RS19_STAA3</name>